<keyword id="KW-0687">Ribonucleoprotein</keyword>
<keyword id="KW-0689">Ribosomal protein</keyword>
<keyword id="KW-0694">RNA-binding</keyword>
<keyword id="KW-0699">rRNA-binding</keyword>
<keyword id="KW-0820">tRNA-binding</keyword>
<protein>
    <recommendedName>
        <fullName evidence="1">Large ribosomal subunit protein uL5</fullName>
    </recommendedName>
    <alternativeName>
        <fullName evidence="2">50S ribosomal protein L5</fullName>
    </alternativeName>
</protein>
<feature type="chain" id="PRO_1000073288" description="Large ribosomal subunit protein uL5">
    <location>
        <begin position="1"/>
        <end position="180"/>
    </location>
</feature>
<sequence>MASYLAEEYKEKVAPALAEKFDYKSSMQIPKIDKIVLNMGVGDAVSNAKNLDEAVEELTLISGQKPLITKAKKSIANFRLREGMSIGAKVTLRGDRMYDFLYKLINVSLPRVRDFRGVSTRSFDGRGNYTLGVKEQLIFLEIDFDKVNRTRGLDIVIVTTANTDEEARELLTQFGMPFAR</sequence>
<organism>
    <name type="scientific">Lactobacillus helveticus (strain DPC 4571)</name>
    <dbReference type="NCBI Taxonomy" id="405566"/>
    <lineage>
        <taxon>Bacteria</taxon>
        <taxon>Bacillati</taxon>
        <taxon>Bacillota</taxon>
        <taxon>Bacilli</taxon>
        <taxon>Lactobacillales</taxon>
        <taxon>Lactobacillaceae</taxon>
        <taxon>Lactobacillus</taxon>
    </lineage>
</organism>
<evidence type="ECO:0000255" key="1">
    <source>
        <dbReference type="HAMAP-Rule" id="MF_01333"/>
    </source>
</evidence>
<evidence type="ECO:0000305" key="2"/>
<comment type="function">
    <text evidence="1">This is one of the proteins that bind and probably mediate the attachment of the 5S RNA into the large ribosomal subunit, where it forms part of the central protuberance. In the 70S ribosome it contacts protein S13 of the 30S subunit (bridge B1b), connecting the 2 subunits; this bridge is implicated in subunit movement. Contacts the P site tRNA; the 5S rRNA and some of its associated proteins might help stabilize positioning of ribosome-bound tRNAs.</text>
</comment>
<comment type="subunit">
    <text evidence="1">Part of the 50S ribosomal subunit; part of the 5S rRNA/L5/L18/L25 subcomplex. Contacts the 5S rRNA and the P site tRNA. Forms a bridge to the 30S subunit in the 70S ribosome.</text>
</comment>
<comment type="similarity">
    <text evidence="1">Belongs to the universal ribosomal protein uL5 family.</text>
</comment>
<accession>A8YXL7</accession>
<name>RL5_LACH4</name>
<dbReference type="EMBL" id="CP000517">
    <property type="protein sequence ID" value="ABX26548.1"/>
    <property type="molecule type" value="Genomic_DNA"/>
</dbReference>
<dbReference type="RefSeq" id="WP_012211382.1">
    <property type="nucleotide sequence ID" value="NC_010080.1"/>
</dbReference>
<dbReference type="SMR" id="A8YXL7"/>
<dbReference type="KEGG" id="lhe:lhv_0324"/>
<dbReference type="eggNOG" id="COG0094">
    <property type="taxonomic scope" value="Bacteria"/>
</dbReference>
<dbReference type="HOGENOM" id="CLU_061015_2_1_9"/>
<dbReference type="Proteomes" id="UP000000790">
    <property type="component" value="Chromosome"/>
</dbReference>
<dbReference type="GO" id="GO:1990904">
    <property type="term" value="C:ribonucleoprotein complex"/>
    <property type="evidence" value="ECO:0007669"/>
    <property type="project" value="UniProtKB-KW"/>
</dbReference>
<dbReference type="GO" id="GO:0005840">
    <property type="term" value="C:ribosome"/>
    <property type="evidence" value="ECO:0007669"/>
    <property type="project" value="UniProtKB-KW"/>
</dbReference>
<dbReference type="GO" id="GO:0019843">
    <property type="term" value="F:rRNA binding"/>
    <property type="evidence" value="ECO:0007669"/>
    <property type="project" value="UniProtKB-UniRule"/>
</dbReference>
<dbReference type="GO" id="GO:0003735">
    <property type="term" value="F:structural constituent of ribosome"/>
    <property type="evidence" value="ECO:0007669"/>
    <property type="project" value="InterPro"/>
</dbReference>
<dbReference type="GO" id="GO:0000049">
    <property type="term" value="F:tRNA binding"/>
    <property type="evidence" value="ECO:0007669"/>
    <property type="project" value="UniProtKB-UniRule"/>
</dbReference>
<dbReference type="GO" id="GO:0006412">
    <property type="term" value="P:translation"/>
    <property type="evidence" value="ECO:0007669"/>
    <property type="project" value="UniProtKB-UniRule"/>
</dbReference>
<dbReference type="FunFam" id="3.30.1440.10:FF:000001">
    <property type="entry name" value="50S ribosomal protein L5"/>
    <property type="match status" value="1"/>
</dbReference>
<dbReference type="Gene3D" id="3.30.1440.10">
    <property type="match status" value="1"/>
</dbReference>
<dbReference type="HAMAP" id="MF_01333_B">
    <property type="entry name" value="Ribosomal_uL5_B"/>
    <property type="match status" value="1"/>
</dbReference>
<dbReference type="InterPro" id="IPR002132">
    <property type="entry name" value="Ribosomal_uL5"/>
</dbReference>
<dbReference type="InterPro" id="IPR020930">
    <property type="entry name" value="Ribosomal_uL5_bac-type"/>
</dbReference>
<dbReference type="InterPro" id="IPR031309">
    <property type="entry name" value="Ribosomal_uL5_C"/>
</dbReference>
<dbReference type="InterPro" id="IPR020929">
    <property type="entry name" value="Ribosomal_uL5_CS"/>
</dbReference>
<dbReference type="InterPro" id="IPR022803">
    <property type="entry name" value="Ribosomal_uL5_dom_sf"/>
</dbReference>
<dbReference type="InterPro" id="IPR031310">
    <property type="entry name" value="Ribosomal_uL5_N"/>
</dbReference>
<dbReference type="NCBIfam" id="NF000585">
    <property type="entry name" value="PRK00010.1"/>
    <property type="match status" value="1"/>
</dbReference>
<dbReference type="PANTHER" id="PTHR11994">
    <property type="entry name" value="60S RIBOSOMAL PROTEIN L11-RELATED"/>
    <property type="match status" value="1"/>
</dbReference>
<dbReference type="Pfam" id="PF00281">
    <property type="entry name" value="Ribosomal_L5"/>
    <property type="match status" value="1"/>
</dbReference>
<dbReference type="Pfam" id="PF00673">
    <property type="entry name" value="Ribosomal_L5_C"/>
    <property type="match status" value="1"/>
</dbReference>
<dbReference type="PIRSF" id="PIRSF002161">
    <property type="entry name" value="Ribosomal_L5"/>
    <property type="match status" value="1"/>
</dbReference>
<dbReference type="SUPFAM" id="SSF55282">
    <property type="entry name" value="RL5-like"/>
    <property type="match status" value="1"/>
</dbReference>
<dbReference type="PROSITE" id="PS00358">
    <property type="entry name" value="RIBOSOMAL_L5"/>
    <property type="match status" value="1"/>
</dbReference>
<proteinExistence type="inferred from homology"/>
<gene>
    <name evidence="1" type="primary">rplE</name>
    <name type="ordered locus">lhv_0324</name>
</gene>
<reference key="1">
    <citation type="journal article" date="2008" name="J. Bacteriol.">
        <title>Genome sequence of Lactobacillus helveticus: an organism distinguished by selective gene loss and IS element expansion.</title>
        <authorList>
            <person name="Callanan M."/>
            <person name="Kaleta P."/>
            <person name="O'Callaghan J."/>
            <person name="O'Sullivan O."/>
            <person name="Jordan K."/>
            <person name="McAuliffe O."/>
            <person name="Sangrador-Vegas A."/>
            <person name="Slattery L."/>
            <person name="Fitzgerald G.F."/>
            <person name="Beresford T."/>
            <person name="Ross R.P."/>
        </authorList>
    </citation>
    <scope>NUCLEOTIDE SEQUENCE [LARGE SCALE GENOMIC DNA]</scope>
    <source>
        <strain>DPC 4571</strain>
    </source>
</reference>